<evidence type="ECO:0000255" key="1">
    <source>
        <dbReference type="HAMAP-Rule" id="MF_00089"/>
    </source>
</evidence>
<protein>
    <recommendedName>
        <fullName evidence="1">Phosphomethylpyrimidine synthase</fullName>
        <ecNumber evidence="1">4.1.99.17</ecNumber>
    </recommendedName>
    <alternativeName>
        <fullName evidence="1">Hydroxymethylpyrimidine phosphate synthase</fullName>
        <shortName evidence="1">HMP-P synthase</shortName>
        <shortName evidence="1">HMP-phosphate synthase</shortName>
        <shortName evidence="1">HMPP synthase</shortName>
    </alternativeName>
    <alternativeName>
        <fullName evidence="1">Thiamine biosynthesis protein ThiC</fullName>
    </alternativeName>
</protein>
<accession>Q63VF5</accession>
<proteinExistence type="inferred from homology"/>
<keyword id="KW-0004">4Fe-4S</keyword>
<keyword id="KW-0408">Iron</keyword>
<keyword id="KW-0411">Iron-sulfur</keyword>
<keyword id="KW-0456">Lyase</keyword>
<keyword id="KW-0479">Metal-binding</keyword>
<keyword id="KW-1185">Reference proteome</keyword>
<keyword id="KW-0949">S-adenosyl-L-methionine</keyword>
<keyword id="KW-0784">Thiamine biosynthesis</keyword>
<keyword id="KW-0862">Zinc</keyword>
<sequence>MNANPKFLSADARVDAAAVAPLPNSRKVYVTGSQPDIRVPMREITQADTPTSFGGEKNPPIYVYDTSGPYTDPDAKIDIRAGLPALRQRWIDARGDTETLAGLTSDYGRERAADPATAELRFPGLHRHPRRAKAGKNVTQMHYARQGIITPEMEYIAIRENQRRAEYLESLKASGPNGAKLAAMMGRQHAGQAFGAAAFGANAPAEITPEFVRDEVARGRAIIPANINHPETEPMIIGRNFLVKINANIGNSAVTSSIGEEVDKMTWAIRWGGDTVMDLSTGKHIHETREWIIRNSPVPIGTVPIYQALEKVNGKAEDLTWEIFRDTLIEQAEQGVDYFTIHAGVRLQYVPLTANRMTGIVSRGGSIMAKWCLAHHKESFLYEHFEEICEIMKAYDVSFSLGDGLRPGSIYDANDEAQLGELKTLGELTQIAWKHDVQVMIEGPGHVPMQLIKENMDLQLDWCKEAPFYTLGPLTTDIAPGYDHITSGIGAAMIGWFGTAMLCYVTPKEHLGLPNKDDVKEGIITYKLAAHAADLAKGHPGAQVRDNALSKARFEFRWQDQFNLGLDPDKAREFHDETLPKDSAKVAHFCSMCGPHFCSMKITQDVREFAAQQGVSENDALKKGMEVKAVEFVKSGSEIYHRQ</sequence>
<comment type="function">
    <text evidence="1">Catalyzes the synthesis of the hydroxymethylpyrimidine phosphate (HMP-P) moiety of thiamine from aminoimidazole ribotide (AIR) in a radical S-adenosyl-L-methionine (SAM)-dependent reaction.</text>
</comment>
<comment type="catalytic activity">
    <reaction evidence="1">
        <text>5-amino-1-(5-phospho-beta-D-ribosyl)imidazole + S-adenosyl-L-methionine = 4-amino-2-methyl-5-(phosphooxymethyl)pyrimidine + CO + 5'-deoxyadenosine + formate + L-methionine + 3 H(+)</text>
        <dbReference type="Rhea" id="RHEA:24840"/>
        <dbReference type="ChEBI" id="CHEBI:15378"/>
        <dbReference type="ChEBI" id="CHEBI:15740"/>
        <dbReference type="ChEBI" id="CHEBI:17245"/>
        <dbReference type="ChEBI" id="CHEBI:17319"/>
        <dbReference type="ChEBI" id="CHEBI:57844"/>
        <dbReference type="ChEBI" id="CHEBI:58354"/>
        <dbReference type="ChEBI" id="CHEBI:59789"/>
        <dbReference type="ChEBI" id="CHEBI:137981"/>
        <dbReference type="EC" id="4.1.99.17"/>
    </reaction>
</comment>
<comment type="cofactor">
    <cofactor evidence="1">
        <name>[4Fe-4S] cluster</name>
        <dbReference type="ChEBI" id="CHEBI:49883"/>
    </cofactor>
    <text evidence="1">Binds 1 [4Fe-4S] cluster per subunit. The cluster is coordinated with 3 cysteines and an exchangeable S-adenosyl-L-methionine.</text>
</comment>
<comment type="pathway">
    <text evidence="1">Cofactor biosynthesis; thiamine diphosphate biosynthesis.</text>
</comment>
<comment type="subunit">
    <text evidence="1">Homodimer.</text>
</comment>
<comment type="similarity">
    <text evidence="1">Belongs to the ThiC family.</text>
</comment>
<gene>
    <name evidence="1" type="primary">thiC</name>
    <name type="ordered locus">BPSL1290</name>
</gene>
<dbReference type="EC" id="4.1.99.17" evidence="1"/>
<dbReference type="EMBL" id="BX571965">
    <property type="protein sequence ID" value="CAH35284.1"/>
    <property type="molecule type" value="Genomic_DNA"/>
</dbReference>
<dbReference type="RefSeq" id="WP_004521865.1">
    <property type="nucleotide sequence ID" value="NZ_CP009538.1"/>
</dbReference>
<dbReference type="RefSeq" id="YP_107911.1">
    <property type="nucleotide sequence ID" value="NC_006350.1"/>
</dbReference>
<dbReference type="SMR" id="Q63VF5"/>
<dbReference type="STRING" id="272560.BPSL1290"/>
<dbReference type="GeneID" id="93059779"/>
<dbReference type="KEGG" id="bps:BPSL1290"/>
<dbReference type="PATRIC" id="fig|272560.51.peg.217"/>
<dbReference type="eggNOG" id="COG0422">
    <property type="taxonomic scope" value="Bacteria"/>
</dbReference>
<dbReference type="UniPathway" id="UPA00060"/>
<dbReference type="Proteomes" id="UP000000605">
    <property type="component" value="Chromosome 1"/>
</dbReference>
<dbReference type="GO" id="GO:0005829">
    <property type="term" value="C:cytosol"/>
    <property type="evidence" value="ECO:0007669"/>
    <property type="project" value="TreeGrafter"/>
</dbReference>
<dbReference type="GO" id="GO:0051539">
    <property type="term" value="F:4 iron, 4 sulfur cluster binding"/>
    <property type="evidence" value="ECO:0007669"/>
    <property type="project" value="UniProtKB-KW"/>
</dbReference>
<dbReference type="GO" id="GO:0016830">
    <property type="term" value="F:carbon-carbon lyase activity"/>
    <property type="evidence" value="ECO:0007669"/>
    <property type="project" value="InterPro"/>
</dbReference>
<dbReference type="GO" id="GO:0008270">
    <property type="term" value="F:zinc ion binding"/>
    <property type="evidence" value="ECO:0007669"/>
    <property type="project" value="UniProtKB-UniRule"/>
</dbReference>
<dbReference type="GO" id="GO:0009228">
    <property type="term" value="P:thiamine biosynthetic process"/>
    <property type="evidence" value="ECO:0007669"/>
    <property type="project" value="UniProtKB-KW"/>
</dbReference>
<dbReference type="GO" id="GO:0009229">
    <property type="term" value="P:thiamine diphosphate biosynthetic process"/>
    <property type="evidence" value="ECO:0007669"/>
    <property type="project" value="UniProtKB-UniRule"/>
</dbReference>
<dbReference type="FunFam" id="3.20.20.540:FF:000001">
    <property type="entry name" value="Phosphomethylpyrimidine synthase"/>
    <property type="match status" value="1"/>
</dbReference>
<dbReference type="Gene3D" id="6.10.250.620">
    <property type="match status" value="1"/>
</dbReference>
<dbReference type="Gene3D" id="3.20.20.540">
    <property type="entry name" value="Radical SAM ThiC family, central domain"/>
    <property type="match status" value="1"/>
</dbReference>
<dbReference type="HAMAP" id="MF_00089">
    <property type="entry name" value="ThiC"/>
    <property type="match status" value="1"/>
</dbReference>
<dbReference type="InterPro" id="IPR037509">
    <property type="entry name" value="ThiC"/>
</dbReference>
<dbReference type="InterPro" id="IPR025747">
    <property type="entry name" value="ThiC-associated_dom"/>
</dbReference>
<dbReference type="InterPro" id="IPR038521">
    <property type="entry name" value="ThiC/Bza_core_dom"/>
</dbReference>
<dbReference type="InterPro" id="IPR002817">
    <property type="entry name" value="ThiC/BzaA/B"/>
</dbReference>
<dbReference type="NCBIfam" id="NF006763">
    <property type="entry name" value="PRK09284.1"/>
    <property type="match status" value="1"/>
</dbReference>
<dbReference type="NCBIfam" id="NF009895">
    <property type="entry name" value="PRK13352.1"/>
    <property type="match status" value="1"/>
</dbReference>
<dbReference type="NCBIfam" id="TIGR00190">
    <property type="entry name" value="thiC"/>
    <property type="match status" value="1"/>
</dbReference>
<dbReference type="PANTHER" id="PTHR30557:SF1">
    <property type="entry name" value="PHOSPHOMETHYLPYRIMIDINE SYNTHASE, CHLOROPLASTIC"/>
    <property type="match status" value="1"/>
</dbReference>
<dbReference type="PANTHER" id="PTHR30557">
    <property type="entry name" value="THIAMINE BIOSYNTHESIS PROTEIN THIC"/>
    <property type="match status" value="1"/>
</dbReference>
<dbReference type="Pfam" id="PF13667">
    <property type="entry name" value="ThiC-associated"/>
    <property type="match status" value="1"/>
</dbReference>
<dbReference type="Pfam" id="PF01964">
    <property type="entry name" value="ThiC_Rad_SAM"/>
    <property type="match status" value="1"/>
</dbReference>
<dbReference type="SFLD" id="SFLDF00407">
    <property type="entry name" value="phosphomethylpyrimidine_syntha"/>
    <property type="match status" value="1"/>
</dbReference>
<dbReference type="SFLD" id="SFLDG01114">
    <property type="entry name" value="phosphomethylpyrimidine_syntha"/>
    <property type="match status" value="1"/>
</dbReference>
<dbReference type="SFLD" id="SFLDS00113">
    <property type="entry name" value="Radical_SAM_Phosphomethylpyrim"/>
    <property type="match status" value="1"/>
</dbReference>
<feature type="chain" id="PRO_0000242246" description="Phosphomethylpyrimidine synthase">
    <location>
        <begin position="1"/>
        <end position="643"/>
    </location>
</feature>
<feature type="binding site" evidence="1">
    <location>
        <position position="248"/>
    </location>
    <ligand>
        <name>substrate</name>
    </ligand>
</feature>
<feature type="binding site" evidence="1">
    <location>
        <position position="277"/>
    </location>
    <ligand>
        <name>substrate</name>
    </ligand>
</feature>
<feature type="binding site" evidence="1">
    <location>
        <position position="306"/>
    </location>
    <ligand>
        <name>substrate</name>
    </ligand>
</feature>
<feature type="binding site" evidence="1">
    <location>
        <position position="342"/>
    </location>
    <ligand>
        <name>substrate</name>
    </ligand>
</feature>
<feature type="binding site" evidence="1">
    <location>
        <begin position="362"/>
        <end position="364"/>
    </location>
    <ligand>
        <name>substrate</name>
    </ligand>
</feature>
<feature type="binding site" evidence="1">
    <location>
        <begin position="403"/>
        <end position="406"/>
    </location>
    <ligand>
        <name>substrate</name>
    </ligand>
</feature>
<feature type="binding site" evidence="1">
    <location>
        <position position="442"/>
    </location>
    <ligand>
        <name>substrate</name>
    </ligand>
</feature>
<feature type="binding site" evidence="1">
    <location>
        <position position="446"/>
    </location>
    <ligand>
        <name>Zn(2+)</name>
        <dbReference type="ChEBI" id="CHEBI:29105"/>
    </ligand>
</feature>
<feature type="binding site" evidence="1">
    <location>
        <position position="469"/>
    </location>
    <ligand>
        <name>substrate</name>
    </ligand>
</feature>
<feature type="binding site" evidence="1">
    <location>
        <position position="510"/>
    </location>
    <ligand>
        <name>Zn(2+)</name>
        <dbReference type="ChEBI" id="CHEBI:29105"/>
    </ligand>
</feature>
<feature type="binding site" evidence="1">
    <location>
        <position position="590"/>
    </location>
    <ligand>
        <name>[4Fe-4S] cluster</name>
        <dbReference type="ChEBI" id="CHEBI:49883"/>
        <note>4Fe-4S-S-AdoMet</note>
    </ligand>
</feature>
<feature type="binding site" evidence="1">
    <location>
        <position position="593"/>
    </location>
    <ligand>
        <name>[4Fe-4S] cluster</name>
        <dbReference type="ChEBI" id="CHEBI:49883"/>
        <note>4Fe-4S-S-AdoMet</note>
    </ligand>
</feature>
<feature type="binding site" evidence="1">
    <location>
        <position position="598"/>
    </location>
    <ligand>
        <name>[4Fe-4S] cluster</name>
        <dbReference type="ChEBI" id="CHEBI:49883"/>
        <note>4Fe-4S-S-AdoMet</note>
    </ligand>
</feature>
<reference key="1">
    <citation type="journal article" date="2004" name="Proc. Natl. Acad. Sci. U.S.A.">
        <title>Genomic plasticity of the causative agent of melioidosis, Burkholderia pseudomallei.</title>
        <authorList>
            <person name="Holden M.T.G."/>
            <person name="Titball R.W."/>
            <person name="Peacock S.J."/>
            <person name="Cerdeno-Tarraga A.-M."/>
            <person name="Atkins T."/>
            <person name="Crossman L.C."/>
            <person name="Pitt T."/>
            <person name="Churcher C."/>
            <person name="Mungall K.L."/>
            <person name="Bentley S.D."/>
            <person name="Sebaihia M."/>
            <person name="Thomson N.R."/>
            <person name="Bason N."/>
            <person name="Beacham I.R."/>
            <person name="Brooks K."/>
            <person name="Brown K.A."/>
            <person name="Brown N.F."/>
            <person name="Challis G.L."/>
            <person name="Cherevach I."/>
            <person name="Chillingworth T."/>
            <person name="Cronin A."/>
            <person name="Crossett B."/>
            <person name="Davis P."/>
            <person name="DeShazer D."/>
            <person name="Feltwell T."/>
            <person name="Fraser A."/>
            <person name="Hance Z."/>
            <person name="Hauser H."/>
            <person name="Holroyd S."/>
            <person name="Jagels K."/>
            <person name="Keith K.E."/>
            <person name="Maddison M."/>
            <person name="Moule S."/>
            <person name="Price C."/>
            <person name="Quail M.A."/>
            <person name="Rabbinowitsch E."/>
            <person name="Rutherford K."/>
            <person name="Sanders M."/>
            <person name="Simmonds M."/>
            <person name="Songsivilai S."/>
            <person name="Stevens K."/>
            <person name="Tumapa S."/>
            <person name="Vesaratchavest M."/>
            <person name="Whitehead S."/>
            <person name="Yeats C."/>
            <person name="Barrell B.G."/>
            <person name="Oyston P.C.F."/>
            <person name="Parkhill J."/>
        </authorList>
    </citation>
    <scope>NUCLEOTIDE SEQUENCE [LARGE SCALE GENOMIC DNA]</scope>
    <source>
        <strain>K96243</strain>
    </source>
</reference>
<name>THIC_BURPS</name>
<organism>
    <name type="scientific">Burkholderia pseudomallei (strain K96243)</name>
    <dbReference type="NCBI Taxonomy" id="272560"/>
    <lineage>
        <taxon>Bacteria</taxon>
        <taxon>Pseudomonadati</taxon>
        <taxon>Pseudomonadota</taxon>
        <taxon>Betaproteobacteria</taxon>
        <taxon>Burkholderiales</taxon>
        <taxon>Burkholderiaceae</taxon>
        <taxon>Burkholderia</taxon>
        <taxon>pseudomallei group</taxon>
    </lineage>
</organism>